<dbReference type="EC" id="3.6.5.5" evidence="2"/>
<dbReference type="EMBL" id="AB012720">
    <property type="protein sequence ID" value="BAA32279.1"/>
    <property type="molecule type" value="mRNA"/>
</dbReference>
<dbReference type="PIR" id="T00394">
    <property type="entry name" value="T00394"/>
</dbReference>
<dbReference type="SMR" id="O93248"/>
<dbReference type="GO" id="GO:0030425">
    <property type="term" value="C:dendrite"/>
    <property type="evidence" value="ECO:0000250"/>
    <property type="project" value="UniProtKB"/>
</dbReference>
<dbReference type="GO" id="GO:0005874">
    <property type="term" value="C:microtubule"/>
    <property type="evidence" value="ECO:0007669"/>
    <property type="project" value="TreeGrafter"/>
</dbReference>
<dbReference type="GO" id="GO:0030061">
    <property type="term" value="C:mitochondrial crista"/>
    <property type="evidence" value="ECO:0000250"/>
    <property type="project" value="UniProtKB"/>
</dbReference>
<dbReference type="GO" id="GO:0005758">
    <property type="term" value="C:mitochondrial intermembrane space"/>
    <property type="evidence" value="ECO:0000250"/>
    <property type="project" value="UniProtKB"/>
</dbReference>
<dbReference type="GO" id="GO:0005741">
    <property type="term" value="C:mitochondrial outer membrane"/>
    <property type="evidence" value="ECO:0000250"/>
    <property type="project" value="UniProtKB"/>
</dbReference>
<dbReference type="GO" id="GO:1901612">
    <property type="term" value="F:cardiolipin binding"/>
    <property type="evidence" value="ECO:0000250"/>
    <property type="project" value="UniProtKB"/>
</dbReference>
<dbReference type="GO" id="GO:0005525">
    <property type="term" value="F:GTP binding"/>
    <property type="evidence" value="ECO:0007669"/>
    <property type="project" value="UniProtKB-KW"/>
</dbReference>
<dbReference type="GO" id="GO:0003924">
    <property type="term" value="F:GTPase activity"/>
    <property type="evidence" value="ECO:0000314"/>
    <property type="project" value="UniProtKB"/>
</dbReference>
<dbReference type="GO" id="GO:0140523">
    <property type="term" value="F:GTPase-dependent fusogenic activity"/>
    <property type="evidence" value="ECO:0000250"/>
    <property type="project" value="UniProtKB"/>
</dbReference>
<dbReference type="GO" id="GO:0180020">
    <property type="term" value="F:membrane bending activity"/>
    <property type="evidence" value="ECO:0000250"/>
    <property type="project" value="UniProtKB"/>
</dbReference>
<dbReference type="GO" id="GO:0046872">
    <property type="term" value="F:metal ion binding"/>
    <property type="evidence" value="ECO:0007669"/>
    <property type="project" value="UniProtKB-KW"/>
</dbReference>
<dbReference type="GO" id="GO:0008017">
    <property type="term" value="F:microtubule binding"/>
    <property type="evidence" value="ECO:0007669"/>
    <property type="project" value="TreeGrafter"/>
</dbReference>
<dbReference type="GO" id="GO:0070300">
    <property type="term" value="F:phosphatidic acid binding"/>
    <property type="evidence" value="ECO:0000250"/>
    <property type="project" value="UniProtKB"/>
</dbReference>
<dbReference type="GO" id="GO:0006915">
    <property type="term" value="P:apoptotic process"/>
    <property type="evidence" value="ECO:0007669"/>
    <property type="project" value="UniProtKB-KW"/>
</dbReference>
<dbReference type="GO" id="GO:0006897">
    <property type="term" value="P:endocytosis"/>
    <property type="evidence" value="ECO:0007669"/>
    <property type="project" value="TreeGrafter"/>
</dbReference>
<dbReference type="GO" id="GO:0046039">
    <property type="term" value="P:GTP metabolic process"/>
    <property type="evidence" value="ECO:0000250"/>
    <property type="project" value="UniProtKB"/>
</dbReference>
<dbReference type="GO" id="GO:0007007">
    <property type="term" value="P:inner mitochondrial membrane organization"/>
    <property type="evidence" value="ECO:0000250"/>
    <property type="project" value="UniProtKB"/>
</dbReference>
<dbReference type="GO" id="GO:0048312">
    <property type="term" value="P:intracellular distribution of mitochondria"/>
    <property type="evidence" value="ECO:0007669"/>
    <property type="project" value="TreeGrafter"/>
</dbReference>
<dbReference type="GO" id="GO:0097749">
    <property type="term" value="P:membrane tubulation"/>
    <property type="evidence" value="ECO:0000250"/>
    <property type="project" value="UniProtKB"/>
</dbReference>
<dbReference type="GO" id="GO:0000266">
    <property type="term" value="P:mitochondrial fission"/>
    <property type="evidence" value="ECO:0007669"/>
    <property type="project" value="TreeGrafter"/>
</dbReference>
<dbReference type="GO" id="GO:0008053">
    <property type="term" value="P:mitochondrial fusion"/>
    <property type="evidence" value="ECO:0000250"/>
    <property type="project" value="UniProtKB"/>
</dbReference>
<dbReference type="GO" id="GO:1990627">
    <property type="term" value="P:mitochondrial inner membrane fusion"/>
    <property type="evidence" value="ECO:0000250"/>
    <property type="project" value="UniProtKB"/>
</dbReference>
<dbReference type="GO" id="GO:0043066">
    <property type="term" value="P:negative regulation of apoptotic process"/>
    <property type="evidence" value="ECO:0000250"/>
    <property type="project" value="UniProtKB"/>
</dbReference>
<dbReference type="GO" id="GO:0016559">
    <property type="term" value="P:peroxisome fission"/>
    <property type="evidence" value="ECO:0007669"/>
    <property type="project" value="TreeGrafter"/>
</dbReference>
<dbReference type="GO" id="GO:0032740">
    <property type="term" value="P:positive regulation of interleukin-17 production"/>
    <property type="evidence" value="ECO:0000250"/>
    <property type="project" value="UniProtKB"/>
</dbReference>
<dbReference type="GO" id="GO:2000330">
    <property type="term" value="P:positive regulation of T-helper 17 cell lineage commitment"/>
    <property type="evidence" value="ECO:0000250"/>
    <property type="project" value="UniProtKB"/>
</dbReference>
<dbReference type="GO" id="GO:0007601">
    <property type="term" value="P:visual perception"/>
    <property type="evidence" value="ECO:0000250"/>
    <property type="project" value="UniProtKB"/>
</dbReference>
<dbReference type="CDD" id="cd08771">
    <property type="entry name" value="DLP_1"/>
    <property type="match status" value="1"/>
</dbReference>
<dbReference type="FunFam" id="3.40.50.300:FF:000171">
    <property type="entry name" value="Dynamin-like 120 kDa protein, mitochondrial"/>
    <property type="match status" value="1"/>
</dbReference>
<dbReference type="Gene3D" id="3.40.50.300">
    <property type="entry name" value="P-loop containing nucleotide triphosphate hydrolases"/>
    <property type="match status" value="1"/>
</dbReference>
<dbReference type="InterPro" id="IPR022812">
    <property type="entry name" value="Dynamin"/>
</dbReference>
<dbReference type="InterPro" id="IPR001401">
    <property type="entry name" value="Dynamin_GTPase"/>
</dbReference>
<dbReference type="InterPro" id="IPR045063">
    <property type="entry name" value="Dynamin_N"/>
</dbReference>
<dbReference type="InterPro" id="IPR030381">
    <property type="entry name" value="G_DYNAMIN_dom"/>
</dbReference>
<dbReference type="InterPro" id="IPR045817">
    <property type="entry name" value="OPA1_C"/>
</dbReference>
<dbReference type="InterPro" id="IPR027417">
    <property type="entry name" value="P-loop_NTPase"/>
</dbReference>
<dbReference type="PANTHER" id="PTHR11566">
    <property type="entry name" value="DYNAMIN"/>
    <property type="match status" value="1"/>
</dbReference>
<dbReference type="PANTHER" id="PTHR11566:SF67">
    <property type="entry name" value="DYNAMIN-LIKE 120 KDA PROTEIN, MITOCHONDRIAL"/>
    <property type="match status" value="1"/>
</dbReference>
<dbReference type="Pfam" id="PF00350">
    <property type="entry name" value="Dynamin_N"/>
    <property type="match status" value="1"/>
</dbReference>
<dbReference type="Pfam" id="PF19434">
    <property type="entry name" value="OPA1_C"/>
    <property type="match status" value="1"/>
</dbReference>
<dbReference type="PRINTS" id="PR00195">
    <property type="entry name" value="DYNAMIN"/>
</dbReference>
<dbReference type="SMART" id="SM00053">
    <property type="entry name" value="DYNc"/>
    <property type="match status" value="1"/>
</dbReference>
<dbReference type="SUPFAM" id="SSF52540">
    <property type="entry name" value="P-loop containing nucleoside triphosphate hydrolases"/>
    <property type="match status" value="1"/>
</dbReference>
<dbReference type="PROSITE" id="PS51718">
    <property type="entry name" value="G_DYNAMIN_2"/>
    <property type="match status" value="1"/>
</dbReference>
<gene>
    <name type="primary">opa1</name>
</gene>
<sequence length="971" mass="112070">MLRVGRAVACVACNNLASKNMGVRFRMPLQKLHPLSRAIHHRYNASANAQRPPHCSAARHFTSMSRLPMRPPKPSPGGHGGWRYQQHRSFWMLRLASRLLKLRYIVLGSAVGGGYTAKKTYEEWKDMLPDMSAYNWVIPDFVWELSDQIDLDKLTKILPELEEIAKLLPELPDFDKIGENFTFLKSILFTAEAPGDTPVKAATEAPVTATPEASDKQFKKSSDKEKVDQLQEELLRTQMKYQRMLERLEKENKDLRKVVLQKDEKGIHQRKIKKSLIDMYSEVLDILSDFDSNYNTQDHLPRVVVVGDQSAGKTSVLEMIAQARIFPRGSGEMMTRSPVKVTLSEGPHHVAMFKDSSREFDLGKEEDLAALRHEIELRMRKSVKEGQTVSPETISLSVKGPGIQRMVLVDLPGVISTVTAGMAADTKETIFSISKNYMQNPNAIILCIQDGSVDAEADRHRPGQSNGPAGERTIFVLTKVDLAEKNLASPNRIQQIVEGKLFPMKALGYFAVVTGKGSAGESIDSIKDYEEDFFQNSRLLRDGMLKAHQVTTKNLSLAVSDCFWKMVRESVEQQADAFKASRFNLETEWKNNYPRLRELDRNELFEKAKNEILDEVISLSQVTPKHWEAILQKKLWERVSTHVIENIYLPAAQTMNSGTFNTTVDIKLKQWTDKQLPHKALEVAWETLQEEFARFMAEYKGKDQDDIFDKLKEAVKDESIKRHKWNERAMDSLRVIQHNALEDRSITDKPQWDAAIQFMEETLQARLKDTDSVINDMVGPDWKQRWMSWKNRSPEQHTRNETRNELERLLKLHEDHTAYLANDEVTTVRKNLEGRGVEVDPALIKDTWHQLYRRHFLQKALQHCNLCRRGFYYYQRHFVDSELECNDVVLFWRIQRMLLITANTLRQQLTNTEVRRLEKNVKEVLEDFGEDNERKVHLITGRRVQLAEDLKKVREIQEKLEAFIEALHKEK</sequence>
<organism>
    <name type="scientific">Oncorhynchus masou</name>
    <name type="common">Cherry salmon</name>
    <name type="synonym">Masu salmon</name>
    <dbReference type="NCBI Taxonomy" id="8020"/>
    <lineage>
        <taxon>Eukaryota</taxon>
        <taxon>Metazoa</taxon>
        <taxon>Chordata</taxon>
        <taxon>Craniata</taxon>
        <taxon>Vertebrata</taxon>
        <taxon>Euteleostomi</taxon>
        <taxon>Actinopterygii</taxon>
        <taxon>Neopterygii</taxon>
        <taxon>Teleostei</taxon>
        <taxon>Protacanthopterygii</taxon>
        <taxon>Salmoniformes</taxon>
        <taxon>Salmonidae</taxon>
        <taxon>Salmoninae</taxon>
        <taxon>Oncorhynchus</taxon>
    </lineage>
</organism>
<proteinExistence type="evidence at transcript level"/>
<name>OPA1_ONCMA</name>
<evidence type="ECO:0000250" key="1">
    <source>
        <dbReference type="UniProtKB" id="G0SGC7"/>
    </source>
</evidence>
<evidence type="ECO:0000250" key="2">
    <source>
        <dbReference type="UniProtKB" id="O60313"/>
    </source>
</evidence>
<evidence type="ECO:0000250" key="3">
    <source>
        <dbReference type="UniProtKB" id="P58281"/>
    </source>
</evidence>
<evidence type="ECO:0000250" key="4">
    <source>
        <dbReference type="UniProtKB" id="Q2TA68"/>
    </source>
</evidence>
<evidence type="ECO:0000255" key="5"/>
<evidence type="ECO:0000255" key="6">
    <source>
        <dbReference type="PROSITE-ProRule" id="PRU01055"/>
    </source>
</evidence>
<evidence type="ECO:0000256" key="7">
    <source>
        <dbReference type="SAM" id="MobiDB-lite"/>
    </source>
</evidence>
<evidence type="ECO:0000269" key="8">
    <source>
    </source>
</evidence>
<evidence type="ECO:0000305" key="9"/>
<feature type="transit peptide" description="Mitochondrion" evidence="4">
    <location>
        <begin position="1"/>
        <end position="89"/>
    </location>
</feature>
<feature type="chain" id="PRO_0000007399" description="Dynamin-like GTPase OPA1, long form">
    <location>
        <begin position="90"/>
        <end position="971"/>
    </location>
</feature>
<feature type="chain" id="PRO_0000417515" description="Dynamin-like GTPase OPA1, short form" evidence="4">
    <location>
        <begin position="201"/>
        <end position="971"/>
    </location>
</feature>
<feature type="topological domain" description="Mitochondrial matrix" evidence="2">
    <location>
        <begin position="90"/>
        <end position="98"/>
    </location>
</feature>
<feature type="transmembrane region" description="Helical" evidence="5">
    <location>
        <begin position="99"/>
        <end position="115"/>
    </location>
</feature>
<feature type="topological domain" description="Mitochondrial intermembrane" evidence="2">
    <location>
        <begin position="116"/>
        <end position="781"/>
    </location>
</feature>
<feature type="intramembrane region" evidence="2">
    <location>
        <begin position="782"/>
        <end position="792"/>
    </location>
</feature>
<feature type="topological domain" description="Mitochondrial intermembrane" evidence="2">
    <location>
        <begin position="793"/>
        <end position="971"/>
    </location>
</feature>
<feature type="domain" description="Dynamin-type G" evidence="6">
    <location>
        <begin position="297"/>
        <end position="572"/>
    </location>
</feature>
<feature type="region of interest" description="Disordered" evidence="7">
    <location>
        <begin position="204"/>
        <end position="224"/>
    </location>
</feature>
<feature type="region of interest" description="G1 motif" evidence="6">
    <location>
        <begin position="307"/>
        <end position="314"/>
    </location>
</feature>
<feature type="region of interest" description="G2 motif" evidence="6">
    <location>
        <begin position="333"/>
        <end position="336"/>
    </location>
</feature>
<feature type="region of interest" description="G3 motif" evidence="6">
    <location>
        <begin position="410"/>
        <end position="413"/>
    </location>
</feature>
<feature type="region of interest" description="G4 motif" evidence="6">
    <location>
        <begin position="478"/>
        <end position="481"/>
    </location>
</feature>
<feature type="region of interest" description="G5 motif" evidence="6">
    <location>
        <begin position="512"/>
        <end position="515"/>
    </location>
</feature>
<feature type="region of interest" description="Stalk region" evidence="2">
    <location>
        <begin position="600"/>
        <end position="847"/>
    </location>
</feature>
<feature type="region of interest" description="Paddle region" evidence="2">
    <location>
        <begin position="747"/>
        <end position="867"/>
    </location>
</feature>
<feature type="region of interest" description="Stalk region" evidence="2">
    <location>
        <begin position="885"/>
        <end position="939"/>
    </location>
</feature>
<feature type="coiled-coil region" evidence="5">
    <location>
        <begin position="219"/>
        <end position="265"/>
    </location>
</feature>
<feature type="coiled-coil region" evidence="5">
    <location>
        <begin position="906"/>
        <end position="971"/>
    </location>
</feature>
<feature type="compositionally biased region" description="Basic and acidic residues" evidence="7">
    <location>
        <begin position="213"/>
        <end position="224"/>
    </location>
</feature>
<feature type="binding site" evidence="2">
    <location>
        <position position="310"/>
    </location>
    <ligand>
        <name>GTP</name>
        <dbReference type="ChEBI" id="CHEBI:37565"/>
    </ligand>
</feature>
<feature type="binding site" evidence="2">
    <location>
        <position position="312"/>
    </location>
    <ligand>
        <name>GTP</name>
        <dbReference type="ChEBI" id="CHEBI:37565"/>
    </ligand>
</feature>
<feature type="binding site" evidence="2">
    <location>
        <position position="313"/>
    </location>
    <ligand>
        <name>GTP</name>
        <dbReference type="ChEBI" id="CHEBI:37565"/>
    </ligand>
</feature>
<feature type="binding site" evidence="2">
    <location>
        <position position="314"/>
    </location>
    <ligand>
        <name>GTP</name>
        <dbReference type="ChEBI" id="CHEBI:37565"/>
    </ligand>
</feature>
<feature type="binding site" evidence="2">
    <location>
        <position position="314"/>
    </location>
    <ligand>
        <name>Mg(2+)</name>
        <dbReference type="ChEBI" id="CHEBI:18420"/>
    </ligand>
</feature>
<feature type="binding site" evidence="2">
    <location>
        <position position="315"/>
    </location>
    <ligand>
        <name>GTP</name>
        <dbReference type="ChEBI" id="CHEBI:37565"/>
    </ligand>
</feature>
<feature type="binding site" evidence="2">
    <location>
        <position position="329"/>
    </location>
    <ligand>
        <name>GTP</name>
        <dbReference type="ChEBI" id="CHEBI:37565"/>
    </ligand>
</feature>
<feature type="binding site" evidence="2">
    <location>
        <position position="335"/>
    </location>
    <ligand>
        <name>Mg(2+)</name>
        <dbReference type="ChEBI" id="CHEBI:18420"/>
    </ligand>
</feature>
<feature type="binding site" evidence="2">
    <location>
        <position position="410"/>
    </location>
    <ligand>
        <name>Mg(2+)</name>
        <dbReference type="ChEBI" id="CHEBI:18420"/>
    </ligand>
</feature>
<feature type="binding site" evidence="2">
    <location>
        <position position="479"/>
    </location>
    <ligand>
        <name>GTP</name>
        <dbReference type="ChEBI" id="CHEBI:37565"/>
    </ligand>
</feature>
<feature type="binding site" evidence="2">
    <location>
        <position position="481"/>
    </location>
    <ligand>
        <name>GTP</name>
        <dbReference type="ChEBI" id="CHEBI:37565"/>
    </ligand>
</feature>
<feature type="binding site" evidence="2">
    <location>
        <position position="514"/>
    </location>
    <ligand>
        <name>GTP</name>
        <dbReference type="ChEBI" id="CHEBI:37565"/>
    </ligand>
</feature>
<feature type="site" description="Cleavage at site S1" evidence="4">
    <location>
        <begin position="200"/>
        <end position="201"/>
    </location>
</feature>
<feature type="disulfide bond" evidence="2">
    <location>
        <begin position="867"/>
        <end position="885"/>
    </location>
</feature>
<keyword id="KW-0053">Apoptosis</keyword>
<keyword id="KW-0175">Coiled coil</keyword>
<keyword id="KW-1015">Disulfide bond</keyword>
<keyword id="KW-0342">GTP-binding</keyword>
<keyword id="KW-0378">Hydrolase</keyword>
<keyword id="KW-0446">Lipid-binding</keyword>
<keyword id="KW-0460">Magnesium</keyword>
<keyword id="KW-0472">Membrane</keyword>
<keyword id="KW-0479">Metal-binding</keyword>
<keyword id="KW-0496">Mitochondrion</keyword>
<keyword id="KW-0999">Mitochondrion inner membrane</keyword>
<keyword id="KW-0547">Nucleotide-binding</keyword>
<keyword id="KW-0809">Transit peptide</keyword>
<keyword id="KW-0812">Transmembrane</keyword>
<keyword id="KW-1133">Transmembrane helix</keyword>
<reference key="1">
    <citation type="journal article" date="1998" name="FEBS Lett.">
        <title>Isolation of a cDNA for a novel 120-kDa GTP-binding protein expressed in motor neurons in the salmon brain.</title>
        <authorList>
            <person name="Kubokawa K."/>
            <person name="Miyashita T."/>
            <person name="Kubo Y."/>
        </authorList>
    </citation>
    <scope>NUCLEOTIDE SEQUENCE [MRNA]</scope>
    <scope>TISSUE SPECIFICITY</scope>
</reference>
<protein>
    <recommendedName>
        <fullName>Dynamin-like GTPase OPA1, mitochondrial</fullName>
        <ecNumber evidence="2">3.6.5.5</ecNumber>
    </recommendedName>
    <alternativeName>
        <fullName>120 kDa G protein expressed in motor neurons</fullName>
    </alternativeName>
    <alternativeName>
        <fullName>Optic atrophy protein 1 homolog</fullName>
    </alternativeName>
    <alternativeName>
        <fullName>mG120</fullName>
    </alternativeName>
    <component>
        <recommendedName>
            <fullName evidence="9">Dynamin-like GTPase OPA1, long form</fullName>
            <shortName evidence="2">L-OPA1</shortName>
        </recommendedName>
    </component>
    <component>
        <recommendedName>
            <fullName evidence="9">Dynamin-like GTPase OPA1, short form</fullName>
            <shortName evidence="2">S-OPA1</shortName>
        </recommendedName>
    </component>
</protein>
<accession>O93248</accession>
<comment type="function">
    <text evidence="2 3">Dynamin-related GTPase that is essential for normal mitochondrial morphology by mediating fusion of the mitochondrial inner membranes, regulating cristae morphology and maintaining respiratory chain function. Exists in two forms: the transmembrane, long form (Dynamin-like GTPase OPA1, long form; L-OPA1), which is tethered to the inner mitochondrial membrane, and the short soluble form (Dynamin-like GTPase OPA1, short form; S-OPA1), which results from proteolytic cleavage and localizes in the intermembrane space. Both forms (L-OPA1 and S-OPA1) cooperate to catalyze the fusion of the mitochondrial inner membrane. The equilibrium between L-OPA1 and S-OPA1 is essential: excess levels of S-OPA1, produced by cleavage by OMA1 following loss of mitochondrial membrane potential, lead to an impaired equilibrium between L-OPA1 and S-OPA1, inhibiting mitochondrial fusion (By similarity). The balance between L-OPA1 and S-OPA1 also influences cristae shape and morphology (By similarity). Its role in mitochondrial morphology is required for mitochondrial genome maintenance (By similarity).</text>
</comment>
<comment type="function">
    <molecule>Dynamin-like GTPase OPA1, long form</molecule>
    <text evidence="1 2">Constitutes the transmembrane long form (L-OPA1) that plays a central role in mitochondrial inner membrane fusion and cristae morphology. L-OPA1 and the soluble short form (S-OPA1) form higher-order helical assemblies that coordinate the fusion of mitochondrial inner membranes. Inner membrane-anchored L-OPA1 molecules initiate membrane remodeling by recruiting soluble S-OPA1 to rapidly polymerize into a flexible cylindrical scaffold encaging the mitochondrial inner membrane. Once at the membrane surface, the formation of S-OPA1 helices induce bilayer curvature. OPA1 dimerization through the paddle region, which inserts into cardiolipin-containing membrane, promotes GTP hydrolysis and the helical assembly of a flexible OPA1 lattice on the membrane, which drives membrane curvature and mitochondrial fusion. Plays a role in the maintenance and remodeling of mitochondrial cristae, some invaginations of the mitochondrial inner membrane that provide an increase in the surface area (By similarity). Probably acts by forming helical filaments at the inside of inner membrane tubes with the shape and dimensions of crista junctions (By similarity).</text>
</comment>
<comment type="function">
    <molecule>Dynamin-like GTPase OPA1, short form</molecule>
    <text evidence="1 2">Constitutes the soluble short form (S-OPA1) generated by cleavage by OMA1, which plays a central role in mitochondrial inner membrane fusion and cristae morphology. The transmembrane long form (L-OPA1) and the S-OPA1 form higher-order helical assemblies that coordinate the fusion of mitochondrial inner membranes. Inner membrane-anchored L-OPA1 molecules initiate membrane remodeling by recruiting soluble S-OPA1 to rapidly polymerize into a flexible cylindrical scaffold encaging the mitochondrial inner membrane. Once at the membrane surface, the formation of S-OPA1 helices induce bilayer curvature. OPA1 dimerization through the paddle region, which inserts into cardiolipin-containing membrane, promotes GTP hydrolysis and the helical assembly of a flexible OPA1 lattice on the membrane, which drives membrane curvature and mitochondrial fusion. Excess levels of S-OPA1 produced by cleavage by OMA1 following stress conditions that induce loss of mitochondrial membrane potential, lead to an impaired equilibrium between L-OPA1 and S-OPA1, thereby inhibiting mitochondrial fusion. Plays a role in the maintenance and remodeling of mitochondrial cristae, some invaginations of the mitochondrial inner membrane that provide an increase in the surface area (By similarity). Probably acts by forming helical filaments at the inside of inner membrane tubes with the shape and dimensions of crista junctions (By similarity).</text>
</comment>
<comment type="catalytic activity">
    <reaction evidence="2">
        <text>GTP + H2O = GDP + phosphate + H(+)</text>
        <dbReference type="Rhea" id="RHEA:19669"/>
        <dbReference type="ChEBI" id="CHEBI:15377"/>
        <dbReference type="ChEBI" id="CHEBI:15378"/>
        <dbReference type="ChEBI" id="CHEBI:37565"/>
        <dbReference type="ChEBI" id="CHEBI:43474"/>
        <dbReference type="ChEBI" id="CHEBI:58189"/>
        <dbReference type="EC" id="3.6.5.5"/>
    </reaction>
</comment>
<comment type="subunit">
    <text evidence="2">Oligomeric complex consisting of membrane-bound and soluble forms of OPA1.</text>
</comment>
<comment type="subcellular location">
    <molecule>Dynamin-like GTPase OPA1, long form</molecule>
    <subcellularLocation>
        <location evidence="2">Mitochondrion inner membrane</location>
        <topology evidence="5">Single-pass membrane protein</topology>
    </subcellularLocation>
    <text evidence="2">Detected at contact sites between endoplasmic reticulum and mitochondrion membranes.</text>
</comment>
<comment type="subcellular location">
    <molecule>Dynamin-like GTPase OPA1, short form</molecule>
    <subcellularLocation>
        <location evidence="2">Mitochondrion intermembrane space</location>
    </subcellularLocation>
</comment>
<comment type="tissue specificity">
    <text evidence="8">Strongly expressed in the brain, ovary and skeletal muscle (PubMed:9708909). In the brain, expression of the mRNA was observed specifically in motor neurons, in nucleus oculomotorius, in nucleus valvulae lateralis, in the medulla oblongata and in the spinal cord (PubMed:9708909).</text>
</comment>
<comment type="domain">
    <text evidence="2">The paddle region plays a major role in driving mitochondrial inner membrane fusion. It binds lipid membranes enriched in negatively charged phospholipids, such as cardiolipin, and promotes membrane tubulation. A conserved intramembrane region, named membrane insertion loop (MIL), within the paddle region inserts deeply into the bilayer, further stabilizing the interactions with cardiolipin-enriched membranes. OPA1 dimerization through the paddle domain promotes the helical assembly of a flexible OPA1 lattice on the membrane, driving mitochondrial fusion in cells.</text>
</comment>
<comment type="PTM">
    <text evidence="2">Cleaved by OMA1 or YME1L downstream of the transmembrane region in response to different signals to generate soluble forms. Cleaved by OMA1 at position S1 following stress conditions, generating the short soluble form (Dynamin-like GTPase OPA1, short form; S-OPA1).</text>
</comment>
<comment type="similarity">
    <text evidence="6">Belongs to the TRAFAC class dynamin-like GTPase superfamily. Dynamin/Fzo/YdjA family.</text>
</comment>